<comment type="function">
    <text evidence="1">Endonuclease IV plays a role in DNA repair. It cleaves phosphodiester bonds at apurinic or apyrimidinic (AP) sites, generating a 3'-hydroxyl group and a 5'-terminal sugar phosphate.</text>
</comment>
<comment type="catalytic activity">
    <reaction evidence="1">
        <text>Endonucleolytic cleavage to 5'-phosphooligonucleotide end-products.</text>
        <dbReference type="EC" id="3.1.21.2"/>
    </reaction>
</comment>
<comment type="cofactor">
    <cofactor evidence="1">
        <name>Zn(2+)</name>
        <dbReference type="ChEBI" id="CHEBI:29105"/>
    </cofactor>
    <text evidence="1">Binds 3 Zn(2+) ions.</text>
</comment>
<comment type="similarity">
    <text evidence="1">Belongs to the AP endonuclease 2 family.</text>
</comment>
<reference key="1">
    <citation type="journal article" date="2008" name="J. Bacteriol.">
        <title>Complete genome sequence of the mosquitocidal bacterium Bacillus sphaericus C3-41 and comparison with those of closely related Bacillus species.</title>
        <authorList>
            <person name="Hu X."/>
            <person name="Fan W."/>
            <person name="Han B."/>
            <person name="Liu H."/>
            <person name="Zheng D."/>
            <person name="Li Q."/>
            <person name="Dong W."/>
            <person name="Yan J."/>
            <person name="Gao M."/>
            <person name="Berry C."/>
            <person name="Yuan Z."/>
        </authorList>
    </citation>
    <scope>NUCLEOTIDE SEQUENCE [LARGE SCALE GENOMIC DNA]</scope>
    <source>
        <strain>C3-41</strain>
    </source>
</reference>
<feature type="chain" id="PRO_1000096889" description="Probable endonuclease 4">
    <location>
        <begin position="1"/>
        <end position="297"/>
    </location>
</feature>
<feature type="binding site" evidence="1">
    <location>
        <position position="68"/>
    </location>
    <ligand>
        <name>Zn(2+)</name>
        <dbReference type="ChEBI" id="CHEBI:29105"/>
        <label>1</label>
    </ligand>
</feature>
<feature type="binding site" evidence="1">
    <location>
        <position position="109"/>
    </location>
    <ligand>
        <name>Zn(2+)</name>
        <dbReference type="ChEBI" id="CHEBI:29105"/>
        <label>1</label>
    </ligand>
</feature>
<feature type="binding site" evidence="1">
    <location>
        <position position="144"/>
    </location>
    <ligand>
        <name>Zn(2+)</name>
        <dbReference type="ChEBI" id="CHEBI:29105"/>
        <label>1</label>
    </ligand>
</feature>
<feature type="binding site" evidence="1">
    <location>
        <position position="144"/>
    </location>
    <ligand>
        <name>Zn(2+)</name>
        <dbReference type="ChEBI" id="CHEBI:29105"/>
        <label>2</label>
    </ligand>
</feature>
<feature type="binding site" evidence="1">
    <location>
        <position position="178"/>
    </location>
    <ligand>
        <name>Zn(2+)</name>
        <dbReference type="ChEBI" id="CHEBI:29105"/>
        <label>2</label>
    </ligand>
</feature>
<feature type="binding site" evidence="1">
    <location>
        <position position="181"/>
    </location>
    <ligand>
        <name>Zn(2+)</name>
        <dbReference type="ChEBI" id="CHEBI:29105"/>
        <label>3</label>
    </ligand>
</feature>
<feature type="binding site" evidence="1">
    <location>
        <position position="213"/>
    </location>
    <ligand>
        <name>Zn(2+)</name>
        <dbReference type="ChEBI" id="CHEBI:29105"/>
        <label>2</label>
    </ligand>
</feature>
<feature type="binding site" evidence="1">
    <location>
        <position position="226"/>
    </location>
    <ligand>
        <name>Zn(2+)</name>
        <dbReference type="ChEBI" id="CHEBI:29105"/>
        <label>3</label>
    </ligand>
</feature>
<feature type="binding site" evidence="1">
    <location>
        <position position="228"/>
    </location>
    <ligand>
        <name>Zn(2+)</name>
        <dbReference type="ChEBI" id="CHEBI:29105"/>
        <label>3</label>
    </ligand>
</feature>
<feature type="binding site" evidence="1">
    <location>
        <position position="258"/>
    </location>
    <ligand>
        <name>Zn(2+)</name>
        <dbReference type="ChEBI" id="CHEBI:29105"/>
        <label>2</label>
    </ligand>
</feature>
<organism>
    <name type="scientific">Lysinibacillus sphaericus (strain C3-41)</name>
    <dbReference type="NCBI Taxonomy" id="444177"/>
    <lineage>
        <taxon>Bacteria</taxon>
        <taxon>Bacillati</taxon>
        <taxon>Bacillota</taxon>
        <taxon>Bacilli</taxon>
        <taxon>Bacillales</taxon>
        <taxon>Bacillaceae</taxon>
        <taxon>Lysinibacillus</taxon>
    </lineage>
</organism>
<sequence>MLLGSHVSMSGKEMLLGSSKEALSYGANTFMIYTGAPQNTRRKAIADLNIMNGRLHMKEHGMTNIVVHAPYIINIGNTEKPETFRLGVDFLQSEIERTAALEATQIVLHPGAHVGAGADAGIAKIIEGLNEVLSQDYPVQIALETMAGKGTECGRSFEELAKIIDGVTHNERLSVCFDTCHTHDAGYNIVEDFDGVLNEFDKLIGVDRIKVLHINDSKNVRGAAKDRHENIGFGHIGFDALNYVVHHPQLMAIPKILETPFVPLASDAKSKSAPYKAEIEMLRSSTFKPELIEALKG</sequence>
<name>END4_LYSSC</name>
<keyword id="KW-0227">DNA damage</keyword>
<keyword id="KW-0234">DNA repair</keyword>
<keyword id="KW-0255">Endonuclease</keyword>
<keyword id="KW-0378">Hydrolase</keyword>
<keyword id="KW-0479">Metal-binding</keyword>
<keyword id="KW-0540">Nuclease</keyword>
<keyword id="KW-0862">Zinc</keyword>
<accession>B1HTF6</accession>
<dbReference type="EC" id="3.1.21.2" evidence="1"/>
<dbReference type="EMBL" id="CP000817">
    <property type="protein sequence ID" value="ACA41160.1"/>
    <property type="molecule type" value="Genomic_DNA"/>
</dbReference>
<dbReference type="RefSeq" id="WP_012295216.1">
    <property type="nucleotide sequence ID" value="NC_010382.1"/>
</dbReference>
<dbReference type="SMR" id="B1HTF6"/>
<dbReference type="EnsemblBacteria" id="ACA41160">
    <property type="protein sequence ID" value="ACA41160"/>
    <property type="gene ID" value="Bsph_3676"/>
</dbReference>
<dbReference type="KEGG" id="lsp:Bsph_3676"/>
<dbReference type="HOGENOM" id="CLU_025885_4_1_9"/>
<dbReference type="Proteomes" id="UP000002164">
    <property type="component" value="Chromosome"/>
</dbReference>
<dbReference type="GO" id="GO:0008833">
    <property type="term" value="F:deoxyribonuclease IV (phage-T4-induced) activity"/>
    <property type="evidence" value="ECO:0007669"/>
    <property type="project" value="UniProtKB-UniRule"/>
</dbReference>
<dbReference type="GO" id="GO:0003677">
    <property type="term" value="F:DNA binding"/>
    <property type="evidence" value="ECO:0007669"/>
    <property type="project" value="InterPro"/>
</dbReference>
<dbReference type="GO" id="GO:0003906">
    <property type="term" value="F:DNA-(apurinic or apyrimidinic site) endonuclease activity"/>
    <property type="evidence" value="ECO:0007669"/>
    <property type="project" value="TreeGrafter"/>
</dbReference>
<dbReference type="GO" id="GO:0008081">
    <property type="term" value="F:phosphoric diester hydrolase activity"/>
    <property type="evidence" value="ECO:0007669"/>
    <property type="project" value="TreeGrafter"/>
</dbReference>
<dbReference type="GO" id="GO:0008270">
    <property type="term" value="F:zinc ion binding"/>
    <property type="evidence" value="ECO:0007669"/>
    <property type="project" value="UniProtKB-UniRule"/>
</dbReference>
<dbReference type="GO" id="GO:0006284">
    <property type="term" value="P:base-excision repair"/>
    <property type="evidence" value="ECO:0007669"/>
    <property type="project" value="TreeGrafter"/>
</dbReference>
<dbReference type="CDD" id="cd00019">
    <property type="entry name" value="AP2Ec"/>
    <property type="match status" value="1"/>
</dbReference>
<dbReference type="FunFam" id="3.20.20.150:FF:000001">
    <property type="entry name" value="Probable endonuclease 4"/>
    <property type="match status" value="1"/>
</dbReference>
<dbReference type="Gene3D" id="3.20.20.150">
    <property type="entry name" value="Divalent-metal-dependent TIM barrel enzymes"/>
    <property type="match status" value="1"/>
</dbReference>
<dbReference type="HAMAP" id="MF_00152">
    <property type="entry name" value="Nfo"/>
    <property type="match status" value="1"/>
</dbReference>
<dbReference type="InterPro" id="IPR001719">
    <property type="entry name" value="AP_endonuc_2"/>
</dbReference>
<dbReference type="InterPro" id="IPR018246">
    <property type="entry name" value="AP_endonuc_F2_Zn_BS"/>
</dbReference>
<dbReference type="InterPro" id="IPR036237">
    <property type="entry name" value="Xyl_isomerase-like_sf"/>
</dbReference>
<dbReference type="InterPro" id="IPR013022">
    <property type="entry name" value="Xyl_isomerase-like_TIM-brl"/>
</dbReference>
<dbReference type="NCBIfam" id="TIGR00587">
    <property type="entry name" value="nfo"/>
    <property type="match status" value="1"/>
</dbReference>
<dbReference type="NCBIfam" id="NF002196">
    <property type="entry name" value="PRK01060.1-1"/>
    <property type="match status" value="1"/>
</dbReference>
<dbReference type="PANTHER" id="PTHR21445:SF0">
    <property type="entry name" value="APURINIC-APYRIMIDINIC ENDONUCLEASE"/>
    <property type="match status" value="1"/>
</dbReference>
<dbReference type="PANTHER" id="PTHR21445">
    <property type="entry name" value="ENDONUCLEASE IV ENDODEOXYRIBONUCLEASE IV"/>
    <property type="match status" value="1"/>
</dbReference>
<dbReference type="Pfam" id="PF01261">
    <property type="entry name" value="AP_endonuc_2"/>
    <property type="match status" value="1"/>
</dbReference>
<dbReference type="SMART" id="SM00518">
    <property type="entry name" value="AP2Ec"/>
    <property type="match status" value="1"/>
</dbReference>
<dbReference type="SUPFAM" id="SSF51658">
    <property type="entry name" value="Xylose isomerase-like"/>
    <property type="match status" value="1"/>
</dbReference>
<dbReference type="PROSITE" id="PS00729">
    <property type="entry name" value="AP_NUCLEASE_F2_1"/>
    <property type="match status" value="1"/>
</dbReference>
<dbReference type="PROSITE" id="PS00730">
    <property type="entry name" value="AP_NUCLEASE_F2_2"/>
    <property type="match status" value="1"/>
</dbReference>
<dbReference type="PROSITE" id="PS00731">
    <property type="entry name" value="AP_NUCLEASE_F2_3"/>
    <property type="match status" value="1"/>
</dbReference>
<dbReference type="PROSITE" id="PS51432">
    <property type="entry name" value="AP_NUCLEASE_F2_4"/>
    <property type="match status" value="1"/>
</dbReference>
<evidence type="ECO:0000255" key="1">
    <source>
        <dbReference type="HAMAP-Rule" id="MF_00152"/>
    </source>
</evidence>
<protein>
    <recommendedName>
        <fullName evidence="1">Probable endonuclease 4</fullName>
        <ecNumber evidence="1">3.1.21.2</ecNumber>
    </recommendedName>
    <alternativeName>
        <fullName evidence="1">Endodeoxyribonuclease IV</fullName>
    </alternativeName>
    <alternativeName>
        <fullName evidence="1">Endonuclease IV</fullName>
    </alternativeName>
</protein>
<proteinExistence type="inferred from homology"/>
<gene>
    <name evidence="1" type="primary">nfo</name>
    <name type="ordered locus">Bsph_3676</name>
</gene>